<feature type="chain" id="PRO_0000076359" description="Pre-rRNA-processing protein TSR2">
    <location>
        <begin position="1"/>
        <end position="205"/>
    </location>
</feature>
<feature type="region of interest" description="Disordered" evidence="1">
    <location>
        <begin position="144"/>
        <end position="205"/>
    </location>
</feature>
<feature type="compositionally biased region" description="Acidic residues" evidence="1">
    <location>
        <begin position="152"/>
        <end position="177"/>
    </location>
</feature>
<feature type="strand" evidence="9">
    <location>
        <begin position="4"/>
        <end position="8"/>
    </location>
</feature>
<feature type="strand" evidence="9">
    <location>
        <begin position="11"/>
        <end position="13"/>
    </location>
</feature>
<feature type="strand" evidence="9">
    <location>
        <begin position="15"/>
        <end position="17"/>
    </location>
</feature>
<feature type="strand" evidence="9">
    <location>
        <begin position="19"/>
        <end position="22"/>
    </location>
</feature>
<feature type="helix" evidence="9">
    <location>
        <begin position="26"/>
        <end position="40"/>
    </location>
</feature>
<feature type="helix" evidence="9">
    <location>
        <begin position="44"/>
        <end position="51"/>
    </location>
</feature>
<feature type="turn" evidence="10">
    <location>
        <begin position="52"/>
        <end position="55"/>
    </location>
</feature>
<feature type="helix" evidence="9">
    <location>
        <begin position="59"/>
        <end position="66"/>
    </location>
</feature>
<feature type="helix" evidence="9">
    <location>
        <begin position="68"/>
        <end position="71"/>
    </location>
</feature>
<feature type="turn" evidence="9">
    <location>
        <begin position="72"/>
        <end position="76"/>
    </location>
</feature>
<feature type="strand" evidence="9">
    <location>
        <begin position="78"/>
        <end position="81"/>
    </location>
</feature>
<feature type="helix" evidence="9">
    <location>
        <begin position="82"/>
        <end position="97"/>
    </location>
</feature>
<feature type="helix" evidence="9">
    <location>
        <begin position="107"/>
        <end position="119"/>
    </location>
</feature>
<feature type="turn" evidence="10">
    <location>
        <begin position="121"/>
        <end position="123"/>
    </location>
</feature>
<feature type="helix" evidence="9">
    <location>
        <begin position="126"/>
        <end position="134"/>
    </location>
</feature>
<feature type="helix" evidence="9">
    <location>
        <begin position="136"/>
        <end position="140"/>
    </location>
</feature>
<feature type="helix" evidence="9">
    <location>
        <begin position="146"/>
        <end position="148"/>
    </location>
</feature>
<protein>
    <recommendedName>
        <fullName>Pre-rRNA-processing protein TSR2</fullName>
    </recommendedName>
    <alternativeName>
        <fullName>20S rRNA accumulation protein 2</fullName>
    </alternativeName>
</protein>
<name>TSR2_YEAST</name>
<accession>Q06672</accession>
<accession>D6VZ69</accession>
<evidence type="ECO:0000256" key="1">
    <source>
        <dbReference type="SAM" id="MobiDB-lite"/>
    </source>
</evidence>
<evidence type="ECO:0000269" key="2">
    <source>
    </source>
</evidence>
<evidence type="ECO:0000269" key="3">
    <source>
    </source>
</evidence>
<evidence type="ECO:0000269" key="4">
    <source>
    </source>
</evidence>
<evidence type="ECO:0000269" key="5">
    <source>
    </source>
</evidence>
<evidence type="ECO:0000305" key="6"/>
<evidence type="ECO:0000312" key="7">
    <source>
        <dbReference type="EMBL" id="AAB67515.1"/>
    </source>
</evidence>
<evidence type="ECO:0000312" key="8">
    <source>
        <dbReference type="SGD" id="S000004427"/>
    </source>
</evidence>
<evidence type="ECO:0007829" key="9">
    <source>
        <dbReference type="PDB" id="6G03"/>
    </source>
</evidence>
<evidence type="ECO:0007829" key="10">
    <source>
        <dbReference type="PDB" id="6G04"/>
    </source>
</evidence>
<proteinExistence type="evidence at protein level"/>
<comment type="function">
    <text evidence="3">Required for 20S pre-rRNA processing.</text>
</comment>
<comment type="subunit">
    <text evidence="2 3">Interacts with RPS26A.</text>
</comment>
<comment type="interaction">
    <interactant intactId="EBI-31165">
        <id>Q06672</id>
    </interactant>
    <interactant intactId="EBI-14584">
        <id>P39939</id>
        <label>RPS26B</label>
    </interactant>
    <organismsDiffer>false</organismsDiffer>
    <experiments>2</experiments>
</comment>
<comment type="subcellular location">
    <subcellularLocation>
        <location evidence="4">Cytoplasm</location>
    </subcellularLocation>
    <subcellularLocation>
        <location evidence="4">Nucleus</location>
    </subcellularLocation>
</comment>
<comment type="miscellaneous">
    <text evidence="5">Present with 13400 molecules/cell in log phase SD medium.</text>
</comment>
<comment type="similarity">
    <text evidence="6">Belongs to the TSR2 family.</text>
</comment>
<comment type="sequence caution" evidence="6">
    <conflict type="erroneous initiation">
        <sequence resource="EMBL-CDS" id="AAB67515"/>
    </conflict>
</comment>
<gene>
    <name evidence="8" type="primary">TSR2</name>
    <name type="ordered locus">YLR435W</name>
</gene>
<sequence>MSTQYIDETAFVQAEQGKTNLMFSDEKQQARFELGVSMVIYKWDALDVAVENSWGGPDSAEKRDWITGIVVDLFKNEKVVDAALIEETLLYAMIDEFETNVEDDSALPIAVEVINIYNDCFNLNYNKVEKLYLEWQEKQRTKKSKRVVHIEGDDDEDDEDVEDYDDEDEDEEMDEVVPDLVSSKPEPIVDEDGFELVQPKGRRKH</sequence>
<organism>
    <name type="scientific">Saccharomyces cerevisiae (strain ATCC 204508 / S288c)</name>
    <name type="common">Baker's yeast</name>
    <dbReference type="NCBI Taxonomy" id="559292"/>
    <lineage>
        <taxon>Eukaryota</taxon>
        <taxon>Fungi</taxon>
        <taxon>Dikarya</taxon>
        <taxon>Ascomycota</taxon>
        <taxon>Saccharomycotina</taxon>
        <taxon>Saccharomycetes</taxon>
        <taxon>Saccharomycetales</taxon>
        <taxon>Saccharomycetaceae</taxon>
        <taxon>Saccharomyces</taxon>
    </lineage>
</organism>
<keyword id="KW-0002">3D-structure</keyword>
<keyword id="KW-0963">Cytoplasm</keyword>
<keyword id="KW-0539">Nucleus</keyword>
<keyword id="KW-1185">Reference proteome</keyword>
<keyword id="KW-0698">rRNA processing</keyword>
<dbReference type="EMBL" id="U21094">
    <property type="protein sequence ID" value="AAB67515.1"/>
    <property type="status" value="ALT_INIT"/>
    <property type="molecule type" value="Genomic_DNA"/>
</dbReference>
<dbReference type="EMBL" id="BK006945">
    <property type="protein sequence ID" value="DAA09735.1"/>
    <property type="molecule type" value="Genomic_DNA"/>
</dbReference>
<dbReference type="PIR" id="S59404">
    <property type="entry name" value="S59404"/>
</dbReference>
<dbReference type="RefSeq" id="NP_013539.4">
    <property type="nucleotide sequence ID" value="NM_001182323.3"/>
</dbReference>
<dbReference type="PDB" id="6G03">
    <property type="method" value="NMR"/>
    <property type="chains" value="A=1-152"/>
</dbReference>
<dbReference type="PDB" id="6G04">
    <property type="method" value="NMR"/>
    <property type="chains" value="A=1-152"/>
</dbReference>
<dbReference type="PDBsum" id="6G03"/>
<dbReference type="PDBsum" id="6G04"/>
<dbReference type="SMR" id="Q06672"/>
<dbReference type="BioGRID" id="31693">
    <property type="interactions" value="205"/>
</dbReference>
<dbReference type="DIP" id="DIP-1584N"/>
<dbReference type="FunCoup" id="Q06672">
    <property type="interactions" value="232"/>
</dbReference>
<dbReference type="IntAct" id="Q06672">
    <property type="interactions" value="5"/>
</dbReference>
<dbReference type="MINT" id="Q06672"/>
<dbReference type="STRING" id="4932.YLR435W"/>
<dbReference type="iPTMnet" id="Q06672"/>
<dbReference type="PaxDb" id="4932-YLR435W"/>
<dbReference type="PeptideAtlas" id="Q06672"/>
<dbReference type="EnsemblFungi" id="YLR435W_mRNA">
    <property type="protein sequence ID" value="YLR435W"/>
    <property type="gene ID" value="YLR435W"/>
</dbReference>
<dbReference type="GeneID" id="851154"/>
<dbReference type="KEGG" id="sce:YLR435W"/>
<dbReference type="AGR" id="SGD:S000004427"/>
<dbReference type="SGD" id="S000004427">
    <property type="gene designation" value="TSR2"/>
</dbReference>
<dbReference type="VEuPathDB" id="FungiDB:YLR435W"/>
<dbReference type="eggNOG" id="KOG4032">
    <property type="taxonomic scope" value="Eukaryota"/>
</dbReference>
<dbReference type="GeneTree" id="ENSGT00390000012692"/>
<dbReference type="HOGENOM" id="CLU_074896_0_1_1"/>
<dbReference type="InParanoid" id="Q06672"/>
<dbReference type="OMA" id="QSNWGGP"/>
<dbReference type="OrthoDB" id="263560at2759"/>
<dbReference type="BioCyc" id="YEAST:G3O-32492-MONOMER"/>
<dbReference type="BioGRID-ORCS" id="851154">
    <property type="hits" value="0 hits in 10 CRISPR screens"/>
</dbReference>
<dbReference type="PRO" id="PR:Q06672"/>
<dbReference type="Proteomes" id="UP000002311">
    <property type="component" value="Chromosome XII"/>
</dbReference>
<dbReference type="RNAct" id="Q06672">
    <property type="molecule type" value="protein"/>
</dbReference>
<dbReference type="GO" id="GO:0005737">
    <property type="term" value="C:cytoplasm"/>
    <property type="evidence" value="ECO:0007005"/>
    <property type="project" value="SGD"/>
</dbReference>
<dbReference type="GO" id="GO:0005634">
    <property type="term" value="C:nucleus"/>
    <property type="evidence" value="ECO:0000314"/>
    <property type="project" value="SGD"/>
</dbReference>
<dbReference type="GO" id="GO:0043022">
    <property type="term" value="F:ribosome binding"/>
    <property type="evidence" value="ECO:0000314"/>
    <property type="project" value="SGD"/>
</dbReference>
<dbReference type="GO" id="GO:0000463">
    <property type="term" value="P:maturation of LSU-rRNA from tricistronic rRNA transcript (SSU-rRNA, 5.8S rRNA, LSU-rRNA)"/>
    <property type="evidence" value="ECO:0000315"/>
    <property type="project" value="SGD"/>
</dbReference>
<dbReference type="GO" id="GO:0000462">
    <property type="term" value="P:maturation of SSU-rRNA from tricistronic rRNA transcript (SSU-rRNA, 5.8S rRNA, LSU-rRNA)"/>
    <property type="evidence" value="ECO:0000315"/>
    <property type="project" value="SGD"/>
</dbReference>
<dbReference type="InterPro" id="IPR019398">
    <property type="entry name" value="Pre-rRNA_process_TSR2"/>
</dbReference>
<dbReference type="PANTHER" id="PTHR21250">
    <property type="entry name" value="PRE-RRNA-PROCESSING PROTEIN TSR2 HOMOLOG"/>
    <property type="match status" value="1"/>
</dbReference>
<dbReference type="Pfam" id="PF10273">
    <property type="entry name" value="WGG"/>
    <property type="match status" value="1"/>
</dbReference>
<reference evidence="7" key="1">
    <citation type="journal article" date="1997" name="Nature">
        <title>The nucleotide sequence of Saccharomyces cerevisiae chromosome XII.</title>
        <authorList>
            <person name="Johnston M."/>
            <person name="Hillier L.W."/>
            <person name="Riles L."/>
            <person name="Albermann K."/>
            <person name="Andre B."/>
            <person name="Ansorge W."/>
            <person name="Benes V."/>
            <person name="Brueckner M."/>
            <person name="Delius H."/>
            <person name="Dubois E."/>
            <person name="Duesterhoeft A."/>
            <person name="Entian K.-D."/>
            <person name="Floeth M."/>
            <person name="Goffeau A."/>
            <person name="Hebling U."/>
            <person name="Heumann K."/>
            <person name="Heuss-Neitzel D."/>
            <person name="Hilbert H."/>
            <person name="Hilger F."/>
            <person name="Kleine K."/>
            <person name="Koetter P."/>
            <person name="Louis E.J."/>
            <person name="Messenguy F."/>
            <person name="Mewes H.-W."/>
            <person name="Miosga T."/>
            <person name="Moestl D."/>
            <person name="Mueller-Auer S."/>
            <person name="Nentwich U."/>
            <person name="Obermaier B."/>
            <person name="Piravandi E."/>
            <person name="Pohl T.M."/>
            <person name="Portetelle D."/>
            <person name="Purnelle B."/>
            <person name="Rechmann S."/>
            <person name="Rieger M."/>
            <person name="Rinke M."/>
            <person name="Rose M."/>
            <person name="Scharfe M."/>
            <person name="Scherens B."/>
            <person name="Scholler P."/>
            <person name="Schwager C."/>
            <person name="Schwarz S."/>
            <person name="Underwood A.P."/>
            <person name="Urrestarazu L.A."/>
            <person name="Vandenbol M."/>
            <person name="Verhasselt P."/>
            <person name="Vierendeels F."/>
            <person name="Voet M."/>
            <person name="Volckaert G."/>
            <person name="Voss H."/>
            <person name="Wambutt R."/>
            <person name="Wedler E."/>
            <person name="Wedler H."/>
            <person name="Zimmermann F.K."/>
            <person name="Zollner A."/>
            <person name="Hani J."/>
            <person name="Hoheisel J.D."/>
        </authorList>
    </citation>
    <scope>NUCLEOTIDE SEQUENCE [LARGE SCALE GENOMIC DNA]</scope>
    <source>
        <strain>ATCC 204508 / S288c</strain>
    </source>
</reference>
<reference key="2">
    <citation type="journal article" date="2014" name="G3 (Bethesda)">
        <title>The reference genome sequence of Saccharomyces cerevisiae: Then and now.</title>
        <authorList>
            <person name="Engel S.R."/>
            <person name="Dietrich F.S."/>
            <person name="Fisk D.G."/>
            <person name="Binkley G."/>
            <person name="Balakrishnan R."/>
            <person name="Costanzo M.C."/>
            <person name="Dwight S.S."/>
            <person name="Hitz B.C."/>
            <person name="Karra K."/>
            <person name="Nash R.S."/>
            <person name="Weng S."/>
            <person name="Wong E.D."/>
            <person name="Lloyd P."/>
            <person name="Skrzypek M.S."/>
            <person name="Miyasato S.R."/>
            <person name="Simison M."/>
            <person name="Cherry J.M."/>
        </authorList>
    </citation>
    <scope>GENOME REANNOTATION</scope>
    <source>
        <strain>ATCC 204508 / S288c</strain>
    </source>
</reference>
<reference evidence="6" key="3">
    <citation type="journal article" date="2000" name="Nature">
        <title>A comprehensive analysis of protein-protein interactions in Saccharomyces cerevisiae.</title>
        <authorList>
            <person name="Uetz P."/>
            <person name="Giot L."/>
            <person name="Cagney G."/>
            <person name="Mansfield T.A."/>
            <person name="Judson R.S."/>
            <person name="Knight J.R."/>
            <person name="Lockshon D."/>
            <person name="Narayan V."/>
            <person name="Srinivasan M."/>
            <person name="Pochart P."/>
            <person name="Qureshi-Emili A."/>
            <person name="Li Y."/>
            <person name="Godwin B."/>
            <person name="Conover D."/>
            <person name="Kalbfleisch T."/>
            <person name="Vijayadamodar G."/>
            <person name="Yang M."/>
            <person name="Johnston M."/>
            <person name="Fields S."/>
            <person name="Rothberg J.M."/>
        </authorList>
    </citation>
    <scope>INTERACTION WITH RPS26A</scope>
</reference>
<reference evidence="6" key="4">
    <citation type="journal article" date="2003" name="Cell">
        <title>A panoramic view of yeast noncoding RNA processing.</title>
        <authorList>
            <person name="Peng W.-T."/>
            <person name="Robinson M.D."/>
            <person name="Mnaimneh S."/>
            <person name="Krogan N.J."/>
            <person name="Cagney G."/>
            <person name="Morris Q.D."/>
            <person name="Davierwala A.P."/>
            <person name="Grigull J."/>
            <person name="Yang X."/>
            <person name="Zhang W."/>
            <person name="Mitsakakis N."/>
            <person name="Ryan O.W."/>
            <person name="Datta N."/>
            <person name="Jojic V."/>
            <person name="Pal C."/>
            <person name="Canadien V."/>
            <person name="Richards D.P."/>
            <person name="Beattie B."/>
            <person name="Wu L.F."/>
            <person name="Altschuler S.J."/>
            <person name="Roweis S."/>
            <person name="Frey B.J."/>
            <person name="Emili A."/>
            <person name="Greenblatt J.F."/>
            <person name="Hughes T.R."/>
        </authorList>
    </citation>
    <scope>FUNCTION</scope>
    <scope>INTERACTION WITH RPS26A</scope>
</reference>
<reference evidence="6" key="5">
    <citation type="journal article" date="2003" name="Nature">
        <title>Sequencing and comparison of yeast species to identify genes and regulatory elements.</title>
        <authorList>
            <person name="Kellis M."/>
            <person name="Patterson N."/>
            <person name="Endrizzi M."/>
            <person name="Birren B.W."/>
            <person name="Lander E.S."/>
        </authorList>
    </citation>
    <scope>IDENTIFICATION OF PROBABLE INITIATION SITE</scope>
</reference>
<reference evidence="6" key="6">
    <citation type="journal article" date="2003" name="Nature">
        <title>Global analysis of protein localization in budding yeast.</title>
        <authorList>
            <person name="Huh W.-K."/>
            <person name="Falvo J.V."/>
            <person name="Gerke L.C."/>
            <person name="Carroll A.S."/>
            <person name="Howson R.W."/>
            <person name="Weissman J.S."/>
            <person name="O'Shea E.K."/>
        </authorList>
    </citation>
    <scope>SUBCELLULAR LOCATION [LARGE SCALE ANALYSIS]</scope>
</reference>
<reference evidence="6" key="7">
    <citation type="journal article" date="2003" name="Nature">
        <title>Global analysis of protein expression in yeast.</title>
        <authorList>
            <person name="Ghaemmaghami S."/>
            <person name="Huh W.-K."/>
            <person name="Bower K."/>
            <person name="Howson R.W."/>
            <person name="Belle A."/>
            <person name="Dephoure N."/>
            <person name="O'Shea E.K."/>
            <person name="Weissman J.S."/>
        </authorList>
    </citation>
    <scope>LEVEL OF PROTEIN EXPRESSION [LARGE SCALE ANALYSIS]</scope>
</reference>